<comment type="function">
    <text evidence="2">RNA-directed RNA polymerase that is involved in both transcription and genome replication. Together with VP3 capping enzyme, forms an enzyme complex positioned near the channels situated at each of the five-fold vertices of the core. Following infection, the outermost layer of the virus is lost, leaving a double-layered particle (DLP) made up of the core and VP6 shell. VP1 then catalyzes the transcription of fully conservative plus-strand genomic RNAs that are extruded through the DLP's channels into the cytoplasm where they function as mRNAs for translation of viral proteins. One copy of each of the viral (+)RNAs is also recruited during core assembly, together with newly synthesized polymerase complexes and VP2. The polymerase of these novo-formed particles catalyzes the synthesis of complementary minus-strands leading to dsRNA formation. To do so, the polymerase specifically recognizes and binds 4 bases 5'-UGUG-3' in the conserved 3'-sequence of plus-strand RNA templates. VP2 presumably activates the autoinhibited VP1-RNA complex to coordinate packaging and genome replication. Once dsRNA synthesis is complete, the polymerase switches to the transcriptional mode, thus providing secondary transcription (By similarity).</text>
</comment>
<comment type="catalytic activity">
    <reaction evidence="2">
        <text>RNA(n) + a ribonucleoside 5'-triphosphate = RNA(n+1) + diphosphate</text>
        <dbReference type="Rhea" id="RHEA:21248"/>
        <dbReference type="Rhea" id="RHEA-COMP:14527"/>
        <dbReference type="Rhea" id="RHEA-COMP:17342"/>
        <dbReference type="ChEBI" id="CHEBI:33019"/>
        <dbReference type="ChEBI" id="CHEBI:61557"/>
        <dbReference type="ChEBI" id="CHEBI:140395"/>
        <dbReference type="EC" id="2.7.7.48"/>
    </reaction>
</comment>
<comment type="cofactor">
    <cofactor evidence="4">
        <name>Mg(2+)</name>
        <dbReference type="ChEBI" id="CHEBI:18420"/>
    </cofactor>
</comment>
<comment type="subunit">
    <text evidence="3 4">Interacts with VP3 (Potential). Interacts with VP2; this interaction activates VP1. Interacts with NSP5; this interaction is probably necessary for the formation of functional virus factories. Interacts with NSP2; this interaction is weak.</text>
</comment>
<comment type="subcellular location">
    <subcellularLocation>
        <location evidence="4">Virion</location>
    </subcellularLocation>
    <text evidence="1 3">Attached inside the inner capsid as a minor component (By similarity). Also found in spherical cytoplasmic structures, called virus factories, that appear early after infection and are the site of viral replication and packaging.</text>
</comment>
<comment type="similarity">
    <text evidence="4">Belongs to the reoviridae RNA-directed RNA polymerase family.</text>
</comment>
<dbReference type="EC" id="2.7.7.48"/>
<dbReference type="EMBL" id="DQ838640">
    <property type="protein sequence ID" value="ABG75819.1"/>
    <property type="molecule type" value="Genomic_RNA"/>
</dbReference>
<dbReference type="RefSeq" id="YP_002302227.1">
    <property type="nucleotide sequence ID" value="NC_011507.2"/>
</dbReference>
<dbReference type="SMR" id="A2T3S0"/>
<dbReference type="GeneID" id="7011368"/>
<dbReference type="KEGG" id="vg:7011368"/>
<dbReference type="Proteomes" id="UP000001119">
    <property type="component" value="Genome"/>
</dbReference>
<dbReference type="GO" id="GO:0044423">
    <property type="term" value="C:virion component"/>
    <property type="evidence" value="ECO:0007669"/>
    <property type="project" value="UniProtKB-KW"/>
</dbReference>
<dbReference type="GO" id="GO:0000166">
    <property type="term" value="F:nucleotide binding"/>
    <property type="evidence" value="ECO:0007669"/>
    <property type="project" value="UniProtKB-KW"/>
</dbReference>
<dbReference type="GO" id="GO:0003723">
    <property type="term" value="F:RNA binding"/>
    <property type="evidence" value="ECO:0007669"/>
    <property type="project" value="UniProtKB-KW"/>
</dbReference>
<dbReference type="GO" id="GO:0003968">
    <property type="term" value="F:RNA-directed RNA polymerase activity"/>
    <property type="evidence" value="ECO:0007669"/>
    <property type="project" value="UniProtKB-KW"/>
</dbReference>
<dbReference type="GO" id="GO:0006351">
    <property type="term" value="P:DNA-templated transcription"/>
    <property type="evidence" value="ECO:0007669"/>
    <property type="project" value="InterPro"/>
</dbReference>
<dbReference type="GO" id="GO:0019079">
    <property type="term" value="P:viral genome replication"/>
    <property type="evidence" value="ECO:0007669"/>
    <property type="project" value="InterPro"/>
</dbReference>
<dbReference type="Gene3D" id="1.10.357.80">
    <property type="match status" value="2"/>
</dbReference>
<dbReference type="Gene3D" id="1.20.120.1390">
    <property type="match status" value="1"/>
</dbReference>
<dbReference type="Gene3D" id="3.30.230.140">
    <property type="match status" value="2"/>
</dbReference>
<dbReference type="Gene3D" id="3.30.70.2480">
    <property type="match status" value="1"/>
</dbReference>
<dbReference type="Gene3D" id="1.10.10.1990">
    <property type="entry name" value="Viral RNA-directed RNA polymerase, 4-helical domain"/>
    <property type="match status" value="1"/>
</dbReference>
<dbReference type="InterPro" id="IPR043502">
    <property type="entry name" value="DNA/RNA_pol_sf"/>
</dbReference>
<dbReference type="InterPro" id="IPR042032">
    <property type="entry name" value="RNA-dir_pol_4-hel_dom"/>
</dbReference>
<dbReference type="InterPro" id="IPR001795">
    <property type="entry name" value="RNA-dir_pol_luteovirus"/>
</dbReference>
<dbReference type="InterPro" id="IPR007097">
    <property type="entry name" value="RNA-dir_pol_reovirus"/>
</dbReference>
<dbReference type="InterPro" id="IPR022071">
    <property type="entry name" value="Rotavirus_VP1_C"/>
</dbReference>
<dbReference type="Pfam" id="PF02123">
    <property type="entry name" value="RdRP_4"/>
    <property type="match status" value="1"/>
</dbReference>
<dbReference type="Pfam" id="PF12289">
    <property type="entry name" value="Rotavirus_VP1"/>
    <property type="match status" value="1"/>
</dbReference>
<dbReference type="SUPFAM" id="SSF56672">
    <property type="entry name" value="DNA/RNA polymerases"/>
    <property type="match status" value="1"/>
</dbReference>
<dbReference type="PROSITE" id="PS50523">
    <property type="entry name" value="RDRP_DSRNA_REO"/>
    <property type="match status" value="1"/>
</dbReference>
<name>RDRP_ROTSH</name>
<proteinExistence type="evidence at protein level"/>
<accession>A2T3S0</accession>
<feature type="chain" id="PRO_0000367811" description="RNA-directed RNA polymerase">
    <location>
        <begin position="1"/>
        <end position="1088"/>
    </location>
</feature>
<feature type="domain" description="RdRp catalytic" evidence="2">
    <location>
        <begin position="501"/>
        <end position="687"/>
    </location>
</feature>
<organismHost>
    <name type="scientific">Chlorocebus pygerythrus</name>
    <name type="common">Vervet monkey</name>
    <name type="synonym">Cercopithecus pygerythrus</name>
    <dbReference type="NCBI Taxonomy" id="60710"/>
</organismHost>
<organism>
    <name type="scientific">Rotavirus A (isolate RVA/Monkey/South Africa/SA11-H96/1958/G3P5B[2])</name>
    <name type="common">RV-A</name>
    <name type="synonym">Simian Agent 11 (isolate SI/South Africa/H96/58)</name>
    <dbReference type="NCBI Taxonomy" id="450149"/>
    <lineage>
        <taxon>Viruses</taxon>
        <taxon>Riboviria</taxon>
        <taxon>Orthornavirae</taxon>
        <taxon>Duplornaviricota</taxon>
        <taxon>Resentoviricetes</taxon>
        <taxon>Reovirales</taxon>
        <taxon>Sedoreoviridae</taxon>
        <taxon>Rotavirus</taxon>
        <taxon>Rotavirus A</taxon>
    </lineage>
</organism>
<keyword id="KW-0460">Magnesium</keyword>
<keyword id="KW-0547">Nucleotide-binding</keyword>
<keyword id="KW-0548">Nucleotidyltransferase</keyword>
<keyword id="KW-1185">Reference proteome</keyword>
<keyword id="KW-0694">RNA-binding</keyword>
<keyword id="KW-0696">RNA-directed RNA polymerase</keyword>
<keyword id="KW-0808">Transferase</keyword>
<keyword id="KW-0693">Viral RNA replication</keyword>
<keyword id="KW-0946">Virion</keyword>
<reference key="1">
    <citation type="journal article" date="2007" name="Virology">
        <title>Genome heterogeneity of SA11 rotavirus due to reassortment with 'O' agent.</title>
        <authorList>
            <person name="Small C."/>
            <person name="Barro M."/>
            <person name="Brown T.L."/>
            <person name="Patton J.T."/>
        </authorList>
    </citation>
    <scope>NUCLEOTIDE SEQUENCE [GENOMIC RNA]</scope>
</reference>
<reference key="2">
    <citation type="journal article" date="2007" name="J. Virol.">
        <title>Interaction of rotavirus polymerase VP1 with nonstructural protein NSP5 is stronger than that with NSP2.</title>
        <authorList>
            <person name="Arnoldi F."/>
            <person name="Campagna M."/>
            <person name="Eichwald C."/>
            <person name="Desselberger U."/>
            <person name="Burrone O.R."/>
        </authorList>
    </citation>
    <scope>INTERACTION WITH NSP2</scope>
    <scope>INTERACTION WITH NSP5</scope>
    <scope>SUBCELLULAR LOCATION</scope>
</reference>
<evidence type="ECO:0000250" key="1"/>
<evidence type="ECO:0000255" key="2">
    <source>
        <dbReference type="PROSITE-ProRule" id="PRU00539"/>
    </source>
</evidence>
<evidence type="ECO:0000269" key="3">
    <source>
    </source>
</evidence>
<evidence type="ECO:0000305" key="4"/>
<sequence length="1088" mass="125208">MGKYNLILSEYLSFIYNSQSAVQIPIYYSSNSELENRCIEFHSKCLENSKNGLSLRKLFVEYNDVIENATLLSILSYSYDKYNAVERKLVKYAKGKPLEADLTVNELDYENNKITSELFPTAEEYTDSLMDPAILTSLSSNLNAVMFWLEKHENDVAEKLKVYKRRLDLFTIVASTINKYGVPRHNAKYRYEYDVMKDKPYYLVTWANSSIEMLMSVFSHDDYLIAKELIVLSYSNRSTLAKLVSSPMSILVALVDINGTFITNEELELEFSNKYVRAIVPDQTFDELNQMLDNMRKAGLVDIPKMIQDWLVDRSIEKFPLMAKIYSWSFHVGFRKQKMLDAALDQLKTEYTENVDDEMYREYTMLIRDEVVKMLEEPVKHDDHLLRDSELAGLLSMSSASNGESRQLKFGRKTIFSTKKNMHVMDDMANERYTPGIIPPVNVDKPIPLGRRDVPGRRTRIIFILPYEYFIAQHAVVEKMLIYAKHTREYAEFYSQSNQLLSYGDVTRFLSNNTMVLYTDVSQWDSSQHNTQPFRKGIIMGLDILANMTNDAKVLQTLNLYKQTQINLMDSYVQIPDGNVIKKIQYGAVASGEKQTKAANSIANLALIKTVLSRISNKHSFATKIIRVDGDDNYAVLQFNTEVTKQMIQDVSNDVRETYARMNAKVKALVSTVGIEIAKRYIAGGKIFFRAGINLLNNEKRGQSTQWDQAAILYSNYIVNRLRGFETDREFILTKIMQMTSVAITGSLRLFPSERVLTTNSTFKVFDSEDFIIEYGTTDDEVYIQRAFMSLSSQKSGIADEIAASSTFKNYVTRLSEQLLFSKNNIVSRGIALTEKAKLNSYAPISLEKRRAQISALLTMLQKPVTFKSSKITINDILRDIKPFFTVSDAHLPIQYQKFMPTLPDNVQYIIQCIGSRTYQIEDDGSKSAISRLISKYSVYKPSIEELYKVISLHENEIQLYLISLGIPKIDADTYVGSKIYSQDKYRILESYVYNLLSINYGCYQLFDFNSPDLEKLIRIPFKGKIPAVTFILHLYAKLEVINYAIKNGSWISLFCNYPKSEMIKLWKKMWNITSLRSPYTNANFFQD</sequence>
<protein>
    <recommendedName>
        <fullName>RNA-directed RNA polymerase</fullName>
        <ecNumber>2.7.7.48</ecNumber>
    </recommendedName>
    <alternativeName>
        <fullName>Protein VP1</fullName>
    </alternativeName>
</protein>